<proteinExistence type="evidence at protein level"/>
<sequence length="376" mass="40712">MGHIRSIRLALAVAAVCTAASAAAGDAKFPPLGPLPPVPVPADNPMTADKVALGKQLFWDNRLSGDGSTPCVSCHLPALGWGDGGAISRGYPGTKHWRNSQTIVNSAYYNKLFWAGSVTSLEAQAPSAAEGGVAGNGDRSLMEMRLRFIPEYVAAFKNVFGADWPRMTQAYAAIAAYQRTVVSDATRVPFDRWQAGDKAAMSAEAQRGYALFSGKAGCIACHNGPLASDQRFYNLGLPEHPDLAEDPLLQITHRWEQYQKGTTEDGYRHADRDKGYYYQTKNPKDIGKFRTPSLREVKYTGPYMHNGTLATLDEVVAFYNAGGGTAPGKTDKLKPLGLTEQESKDLVAFVEALSMTEPLIHDDPKLPGDYQPLATQ</sequence>
<evidence type="ECO:0000250" key="1">
    <source>
        <dbReference type="UniProtKB" id="A0A391NGM7"/>
    </source>
</evidence>
<evidence type="ECO:0000250" key="2">
    <source>
        <dbReference type="UniProtKB" id="P14532"/>
    </source>
</evidence>
<evidence type="ECO:0000255" key="3"/>
<evidence type="ECO:0000255" key="4">
    <source>
        <dbReference type="PROSITE-ProRule" id="PRU00433"/>
    </source>
</evidence>
<evidence type="ECO:0000269" key="5">
    <source>
    </source>
</evidence>
<evidence type="ECO:0000303" key="6">
    <source>
    </source>
</evidence>
<evidence type="ECO:0000305" key="7"/>
<evidence type="ECO:0000305" key="8">
    <source>
    </source>
</evidence>
<evidence type="ECO:0000312" key="9">
    <source>
        <dbReference type="EMBL" id="MBT0960286.1"/>
    </source>
</evidence>
<dbReference type="EC" id="1.11.1.5" evidence="8"/>
<dbReference type="EMBL" id="JAEKFT010000003">
    <property type="protein sequence ID" value="MBT0960286.1"/>
    <property type="molecule type" value="Genomic_DNA"/>
</dbReference>
<dbReference type="RefSeq" id="WP_214360038.1">
    <property type="nucleotide sequence ID" value="NZ_JAEKFT010000003.1"/>
</dbReference>
<dbReference type="SMR" id="P0DV68"/>
<dbReference type="Proteomes" id="UP000694660">
    <property type="component" value="Unassembled WGS sequence"/>
</dbReference>
<dbReference type="GO" id="GO:0042597">
    <property type="term" value="C:periplasmic space"/>
    <property type="evidence" value="ECO:0007669"/>
    <property type="project" value="UniProtKB-SubCell"/>
</dbReference>
<dbReference type="GO" id="GO:0004130">
    <property type="term" value="F:cytochrome-c peroxidase activity"/>
    <property type="evidence" value="ECO:0007669"/>
    <property type="project" value="TreeGrafter"/>
</dbReference>
<dbReference type="GO" id="GO:0009055">
    <property type="term" value="F:electron transfer activity"/>
    <property type="evidence" value="ECO:0007669"/>
    <property type="project" value="InterPro"/>
</dbReference>
<dbReference type="GO" id="GO:0020037">
    <property type="term" value="F:heme binding"/>
    <property type="evidence" value="ECO:0007669"/>
    <property type="project" value="InterPro"/>
</dbReference>
<dbReference type="GO" id="GO:0046872">
    <property type="term" value="F:metal ion binding"/>
    <property type="evidence" value="ECO:0007669"/>
    <property type="project" value="UniProtKB-KW"/>
</dbReference>
<dbReference type="Gene3D" id="1.10.760.10">
    <property type="entry name" value="Cytochrome c-like domain"/>
    <property type="match status" value="2"/>
</dbReference>
<dbReference type="InterPro" id="IPR009056">
    <property type="entry name" value="Cyt_c-like_dom"/>
</dbReference>
<dbReference type="InterPro" id="IPR036909">
    <property type="entry name" value="Cyt_c-like_dom_sf"/>
</dbReference>
<dbReference type="InterPro" id="IPR051395">
    <property type="entry name" value="Cytochrome_c_Peroxidase/MauG"/>
</dbReference>
<dbReference type="InterPro" id="IPR004852">
    <property type="entry name" value="Di-haem_cyt_c_peroxidsae"/>
</dbReference>
<dbReference type="InterPro" id="IPR026259">
    <property type="entry name" value="MauG/Cytc_peroxidase"/>
</dbReference>
<dbReference type="PANTHER" id="PTHR30600:SF10">
    <property type="entry name" value="BLL6722 PROTEIN"/>
    <property type="match status" value="1"/>
</dbReference>
<dbReference type="PANTHER" id="PTHR30600">
    <property type="entry name" value="CYTOCHROME C PEROXIDASE-RELATED"/>
    <property type="match status" value="1"/>
</dbReference>
<dbReference type="Pfam" id="PF03150">
    <property type="entry name" value="CCP_MauG"/>
    <property type="match status" value="1"/>
</dbReference>
<dbReference type="PIRSF" id="PIRSF000294">
    <property type="entry name" value="Cytochrome-c_peroxidase"/>
    <property type="match status" value="1"/>
</dbReference>
<dbReference type="SUPFAM" id="SSF46626">
    <property type="entry name" value="Cytochrome c"/>
    <property type="match status" value="2"/>
</dbReference>
<dbReference type="PROSITE" id="PS51007">
    <property type="entry name" value="CYTC"/>
    <property type="match status" value="2"/>
</dbReference>
<name>IDRP1_DENI1</name>
<keyword id="KW-0349">Heme</keyword>
<keyword id="KW-0408">Iron</keyword>
<keyword id="KW-0479">Metal-binding</keyword>
<keyword id="KW-0560">Oxidoreductase</keyword>
<keyword id="KW-0574">Periplasm</keyword>
<keyword id="KW-1185">Reference proteome</keyword>
<keyword id="KW-0677">Repeat</keyword>
<keyword id="KW-0732">Signal</keyword>
<accession>P0DV68</accession>
<accession>A0A944D850</accession>
<organism>
    <name type="scientific">Denitromonas iodatirespirans</name>
    <dbReference type="NCBI Taxonomy" id="2795389"/>
    <lineage>
        <taxon>Bacteria</taxon>
        <taxon>Pseudomonadati</taxon>
        <taxon>Pseudomonadota</taxon>
        <taxon>Betaproteobacteria</taxon>
        <taxon>Rhodocyclales</taxon>
        <taxon>Zoogloeaceae</taxon>
        <taxon>Denitromonas</taxon>
    </lineage>
</organism>
<gene>
    <name evidence="6" type="primary">idrP1</name>
    <name evidence="9" type="ORF">I8J34_03785</name>
</gene>
<protein>
    <recommendedName>
        <fullName evidence="7">Cytochrome-c peroxidase IdrP1</fullName>
        <ecNumber evidence="8">1.11.1.5</ecNumber>
    </recommendedName>
    <alternativeName>
        <fullName evidence="7">Iodate reductase subunit IdrP1</fullName>
    </alternativeName>
</protein>
<comment type="function">
    <text evidence="5">Involved in iodate respiration (PubMed:34215855). May play a critical role in detoxification of inadvertent H(2)O(2) generated by the iodate reductase IdrA/IdrB (PubMed:34215855).</text>
</comment>
<comment type="catalytic activity">
    <reaction evidence="8">
        <text>2 Fe(II)-[cytochrome c] + H2O2 + 2 H(+) = 2 Fe(III)-[cytochrome c] + 2 H2O</text>
        <dbReference type="Rhea" id="RHEA:16581"/>
        <dbReference type="Rhea" id="RHEA-COMP:10350"/>
        <dbReference type="Rhea" id="RHEA-COMP:14399"/>
        <dbReference type="ChEBI" id="CHEBI:15377"/>
        <dbReference type="ChEBI" id="CHEBI:15378"/>
        <dbReference type="ChEBI" id="CHEBI:16240"/>
        <dbReference type="ChEBI" id="CHEBI:29033"/>
        <dbReference type="ChEBI" id="CHEBI:29034"/>
        <dbReference type="EC" id="1.11.1.5"/>
    </reaction>
</comment>
<comment type="cofactor">
    <cofactor evidence="2">
        <name>heme c</name>
        <dbReference type="ChEBI" id="CHEBI:61717"/>
    </cofactor>
    <text evidence="2">Binds 2 heme c groups.</text>
</comment>
<comment type="subunit">
    <text evidence="8">The iodate reductase (Idr) complex is composed of a molybdopterin-dependent iodate reductase (IdrA and IdrB subunits) and two associated peroxidases (IdrP1 and IdrP2).</text>
</comment>
<comment type="subcellular location">
    <subcellularLocation>
        <location evidence="1">Periplasm</location>
    </subcellularLocation>
</comment>
<reference key="1">
    <citation type="journal article" date="2022" name="ISME J.">
        <title>Genetic and phylogenetic analysis of dissimilatory iodate-reducing bacteria identifies potential niches across the world's oceans.</title>
        <authorList>
            <person name="Reyes-Umana V."/>
            <person name="Henning Z."/>
            <person name="Lee K."/>
            <person name="Barnum T.P."/>
            <person name="Coates J.D."/>
        </authorList>
    </citation>
    <scope>NUCLEOTIDE SEQUENCE [LARGE SCALE GENOMIC DNA]</scope>
    <scope>FUNCTION</scope>
    <scope>SUBUNIT</scope>
    <source>
        <strain>ATCC TSD-242 / DSM 113304 / IR12</strain>
    </source>
</reference>
<feature type="signal peptide" evidence="3">
    <location>
        <begin position="1"/>
        <end position="24"/>
    </location>
</feature>
<feature type="chain" id="PRO_0000455408" description="Cytochrome-c peroxidase IdrP1" evidence="3">
    <location>
        <begin position="25"/>
        <end position="376"/>
    </location>
</feature>
<feature type="domain" description="Cytochrome c 1" evidence="4">
    <location>
        <begin position="49"/>
        <end position="157"/>
    </location>
</feature>
<feature type="domain" description="Cytochrome c 2" evidence="4">
    <location>
        <begin position="203"/>
        <end position="354"/>
    </location>
</feature>
<feature type="binding site" description="covalent" evidence="4">
    <location>
        <position position="71"/>
    </location>
    <ligand>
        <name>heme c</name>
        <dbReference type="ChEBI" id="CHEBI:61717"/>
        <label>1</label>
    </ligand>
</feature>
<feature type="binding site" description="covalent" evidence="4">
    <location>
        <position position="74"/>
    </location>
    <ligand>
        <name>heme c</name>
        <dbReference type="ChEBI" id="CHEBI:61717"/>
        <label>1</label>
    </ligand>
</feature>
<feature type="binding site" description="axial binding residue" evidence="4">
    <location>
        <position position="75"/>
    </location>
    <ligand>
        <name>heme c</name>
        <dbReference type="ChEBI" id="CHEBI:61717"/>
        <label>1</label>
    </ligand>
    <ligandPart>
        <name>Fe</name>
        <dbReference type="ChEBI" id="CHEBI:18248"/>
    </ligandPart>
</feature>
<feature type="binding site" description="covalent" evidence="4">
    <location>
        <position position="218"/>
    </location>
    <ligand>
        <name>heme c</name>
        <dbReference type="ChEBI" id="CHEBI:61717"/>
        <label>2</label>
    </ligand>
</feature>
<feature type="binding site" description="covalent" evidence="4">
    <location>
        <position position="221"/>
    </location>
    <ligand>
        <name>heme c</name>
        <dbReference type="ChEBI" id="CHEBI:61717"/>
        <label>2</label>
    </ligand>
</feature>
<feature type="binding site" description="axial binding residue" evidence="4">
    <location>
        <position position="222"/>
    </location>
    <ligand>
        <name>heme c</name>
        <dbReference type="ChEBI" id="CHEBI:61717"/>
        <label>2</label>
    </ligand>
    <ligandPart>
        <name>Fe</name>
        <dbReference type="ChEBI" id="CHEBI:18248"/>
    </ligandPart>
</feature>